<accession>P62028</accession>
<feature type="chain" id="PRO_0000056504" description="1-pyrroline-5-carboxylate dehydrogenase">
    <location>
        <begin position="1"/>
        <end position="515"/>
    </location>
</feature>
<feature type="active site" evidence="1">
    <location>
        <position position="286"/>
    </location>
</feature>
<feature type="active site" evidence="1">
    <location>
        <position position="320"/>
    </location>
</feature>
<keyword id="KW-0520">NAD</keyword>
<keyword id="KW-0560">Oxidoreductase</keyword>
<proteinExistence type="inferred from homology"/>
<reference key="1">
    <citation type="journal article" date="2004" name="Nucleic Acids Res.">
        <title>The genome sequence of Bacillus cereus ATCC 10987 reveals metabolic adaptations and a large plasmid related to Bacillus anthracis pXO1.</title>
        <authorList>
            <person name="Rasko D.A."/>
            <person name="Ravel J."/>
            <person name="Oekstad O.A."/>
            <person name="Helgason E."/>
            <person name="Cer R.Z."/>
            <person name="Jiang L."/>
            <person name="Shores K.A."/>
            <person name="Fouts D.E."/>
            <person name="Tourasse N.J."/>
            <person name="Angiuoli S.V."/>
            <person name="Kolonay J.F."/>
            <person name="Nelson W.C."/>
            <person name="Kolstoe A.-B."/>
            <person name="Fraser C.M."/>
            <person name="Read T.D."/>
        </authorList>
    </citation>
    <scope>NUCLEOTIDE SEQUENCE [LARGE SCALE GENOMIC DNA]</scope>
    <source>
        <strain>ATCC 10987 / NRS 248</strain>
    </source>
</reference>
<dbReference type="EC" id="1.2.1.88" evidence="1"/>
<dbReference type="EMBL" id="AE017194">
    <property type="protein sequence ID" value="AAS39274.1"/>
    <property type="molecule type" value="Genomic_DNA"/>
</dbReference>
<dbReference type="SMR" id="P62028"/>
<dbReference type="KEGG" id="bca:BCE_0338"/>
<dbReference type="HOGENOM" id="CLU_005391_0_0_9"/>
<dbReference type="UniPathway" id="UPA00261">
    <property type="reaction ID" value="UER00374"/>
</dbReference>
<dbReference type="Proteomes" id="UP000002527">
    <property type="component" value="Chromosome"/>
</dbReference>
<dbReference type="GO" id="GO:0009898">
    <property type="term" value="C:cytoplasmic side of plasma membrane"/>
    <property type="evidence" value="ECO:0007669"/>
    <property type="project" value="TreeGrafter"/>
</dbReference>
<dbReference type="GO" id="GO:0003842">
    <property type="term" value="F:1-pyrroline-5-carboxylate dehydrogenase activity"/>
    <property type="evidence" value="ECO:0007669"/>
    <property type="project" value="UniProtKB-UniRule"/>
</dbReference>
<dbReference type="GO" id="GO:0006537">
    <property type="term" value="P:glutamate biosynthetic process"/>
    <property type="evidence" value="ECO:0007669"/>
    <property type="project" value="UniProtKB-UniRule"/>
</dbReference>
<dbReference type="GO" id="GO:0010133">
    <property type="term" value="P:proline catabolic process to glutamate"/>
    <property type="evidence" value="ECO:0007669"/>
    <property type="project" value="UniProtKB-UniPathway"/>
</dbReference>
<dbReference type="CDD" id="cd07124">
    <property type="entry name" value="ALDH_PutA-P5CDH-RocA"/>
    <property type="match status" value="1"/>
</dbReference>
<dbReference type="FunFam" id="3.40.309.10:FF:000005">
    <property type="entry name" value="1-pyrroline-5-carboxylate dehydrogenase 1"/>
    <property type="match status" value="1"/>
</dbReference>
<dbReference type="FunFam" id="3.40.605.10:FF:000045">
    <property type="entry name" value="1-pyrroline-5-carboxylate dehydrogenase 1"/>
    <property type="match status" value="1"/>
</dbReference>
<dbReference type="Gene3D" id="3.40.605.10">
    <property type="entry name" value="Aldehyde Dehydrogenase, Chain A, domain 1"/>
    <property type="match status" value="1"/>
</dbReference>
<dbReference type="Gene3D" id="3.40.309.10">
    <property type="entry name" value="Aldehyde Dehydrogenase, Chain A, domain 2"/>
    <property type="match status" value="1"/>
</dbReference>
<dbReference type="HAMAP" id="MF_00733">
    <property type="entry name" value="RocA"/>
    <property type="match status" value="1"/>
</dbReference>
<dbReference type="InterPro" id="IPR016161">
    <property type="entry name" value="Ald_DH/histidinol_DH"/>
</dbReference>
<dbReference type="InterPro" id="IPR016163">
    <property type="entry name" value="Ald_DH_C"/>
</dbReference>
<dbReference type="InterPro" id="IPR016160">
    <property type="entry name" value="Ald_DH_CS_CYS"/>
</dbReference>
<dbReference type="InterPro" id="IPR029510">
    <property type="entry name" value="Ald_DH_CS_GLU"/>
</dbReference>
<dbReference type="InterPro" id="IPR016162">
    <property type="entry name" value="Ald_DH_N"/>
</dbReference>
<dbReference type="InterPro" id="IPR015590">
    <property type="entry name" value="Aldehyde_DH_dom"/>
</dbReference>
<dbReference type="InterPro" id="IPR050485">
    <property type="entry name" value="Proline_metab_enzyme"/>
</dbReference>
<dbReference type="InterPro" id="IPR005932">
    <property type="entry name" value="RocA"/>
</dbReference>
<dbReference type="InterPro" id="IPR047597">
    <property type="entry name" value="RocA_bacillales"/>
</dbReference>
<dbReference type="NCBIfam" id="TIGR01237">
    <property type="entry name" value="D1pyr5carbox2"/>
    <property type="match status" value="1"/>
</dbReference>
<dbReference type="NCBIfam" id="NF002852">
    <property type="entry name" value="PRK03137.1"/>
    <property type="match status" value="1"/>
</dbReference>
<dbReference type="PANTHER" id="PTHR42862">
    <property type="entry name" value="DELTA-1-PYRROLINE-5-CARBOXYLATE DEHYDROGENASE 1, ISOFORM A-RELATED"/>
    <property type="match status" value="1"/>
</dbReference>
<dbReference type="PANTHER" id="PTHR42862:SF1">
    <property type="entry name" value="DELTA-1-PYRROLINE-5-CARBOXYLATE DEHYDROGENASE 2, ISOFORM A-RELATED"/>
    <property type="match status" value="1"/>
</dbReference>
<dbReference type="Pfam" id="PF00171">
    <property type="entry name" value="Aldedh"/>
    <property type="match status" value="1"/>
</dbReference>
<dbReference type="SUPFAM" id="SSF53720">
    <property type="entry name" value="ALDH-like"/>
    <property type="match status" value="1"/>
</dbReference>
<dbReference type="PROSITE" id="PS00070">
    <property type="entry name" value="ALDEHYDE_DEHYDR_CYS"/>
    <property type="match status" value="1"/>
</dbReference>
<dbReference type="PROSITE" id="PS00687">
    <property type="entry name" value="ALDEHYDE_DEHYDR_GLU"/>
    <property type="match status" value="1"/>
</dbReference>
<name>ROCA_BACC1</name>
<sequence>MVVAYKHEPFTDFSVEANKLAFEEGLKKVESYLGQDYPLIIGGEKITTEDKIVSVNPANKEELVGRVSKASRELAEKAMQVADETFQTWRKSKPEMRADILFRAAAIVRRRKHEFSAILVKEAGKPWNEADADTAEAIDFMEYYGRQMLKLKDGIPVESRPIEYNRFSYIPLGVGVIISPWNFPFAIMAGMTTAALVSGNTVLLKPASTTPVVAAKFMEVLEEAGLPAGVVNFVPGSGSEVGDYLVDHPRTRFISFTGSRDVGIRIYERAAKVNPGQIWLKRVIAEMGGKDTIVVDKEADLELAAKSIVASAFGFSGQKCSACSRAVIHEDVYDHVLNRAVELTKELTVANPAVLGTNMGPVNDQAAFDKVMSYVAIGKEEGRILAGGEGDDSKGWFIQPTIVADVAEDARLMKEEIFGPVVAFCKAKDFDHALAIANNTEYGLTGAVISNNRDHIEKAREDFHVGNLYFNRGCTGAIVGYQPFGGFNMSGTDSKAGGPDYLALHMQAKTTSETL</sequence>
<protein>
    <recommendedName>
        <fullName evidence="1">1-pyrroline-5-carboxylate dehydrogenase</fullName>
        <shortName evidence="1">P5C dehydrogenase</shortName>
        <ecNumber evidence="1">1.2.1.88</ecNumber>
    </recommendedName>
    <alternativeName>
        <fullName evidence="1">L-glutamate gamma-semialdehyde dehydrogenase</fullName>
    </alternativeName>
</protein>
<gene>
    <name evidence="1" type="primary">rocA</name>
    <name type="ordered locus">BCE_0338</name>
</gene>
<organism>
    <name type="scientific">Bacillus cereus (strain ATCC 10987 / NRS 248)</name>
    <dbReference type="NCBI Taxonomy" id="222523"/>
    <lineage>
        <taxon>Bacteria</taxon>
        <taxon>Bacillati</taxon>
        <taxon>Bacillota</taxon>
        <taxon>Bacilli</taxon>
        <taxon>Bacillales</taxon>
        <taxon>Bacillaceae</taxon>
        <taxon>Bacillus</taxon>
        <taxon>Bacillus cereus group</taxon>
    </lineage>
</organism>
<evidence type="ECO:0000255" key="1">
    <source>
        <dbReference type="HAMAP-Rule" id="MF_00733"/>
    </source>
</evidence>
<comment type="catalytic activity">
    <reaction evidence="1">
        <text>L-glutamate 5-semialdehyde + NAD(+) + H2O = L-glutamate + NADH + 2 H(+)</text>
        <dbReference type="Rhea" id="RHEA:30235"/>
        <dbReference type="ChEBI" id="CHEBI:15377"/>
        <dbReference type="ChEBI" id="CHEBI:15378"/>
        <dbReference type="ChEBI" id="CHEBI:29985"/>
        <dbReference type="ChEBI" id="CHEBI:57540"/>
        <dbReference type="ChEBI" id="CHEBI:57945"/>
        <dbReference type="ChEBI" id="CHEBI:58066"/>
        <dbReference type="EC" id="1.2.1.88"/>
    </reaction>
</comment>
<comment type="pathway">
    <text evidence="1">Amino-acid degradation; L-proline degradation into L-glutamate; L-glutamate from L-proline: step 2/2.</text>
</comment>
<comment type="similarity">
    <text evidence="1">Belongs to the aldehyde dehydrogenase family. RocA subfamily.</text>
</comment>